<sequence length="147" mass="16062">MVHLSGEEKSAVTALWGKVNVEEVGGETLGRLLVVYPWTQRFFESFGDLSTASAVMGNPKVKAHGKKVLAAFSEGLSHLDNLKGTFAKLSELHCDKLHVDPENFRLLGNVLVIVLSHHFGKEFTPQVQAAYQKVVAGVANALAHKYH</sequence>
<feature type="initiator methionine" description="Removed" evidence="1">
    <location>
        <position position="1"/>
    </location>
</feature>
<feature type="chain" id="PRO_0000052990" description="Hemoglobin subunit beta">
    <location>
        <begin position="2"/>
        <end position="147"/>
    </location>
</feature>
<feature type="domain" description="Globin" evidence="3">
    <location>
        <begin position="3"/>
        <end position="147"/>
    </location>
</feature>
<feature type="binding site" description="distal binding residue">
    <location>
        <position position="64"/>
    </location>
    <ligand>
        <name>heme b</name>
        <dbReference type="ChEBI" id="CHEBI:60344"/>
    </ligand>
    <ligandPart>
        <name>Fe</name>
        <dbReference type="ChEBI" id="CHEBI:18248"/>
    </ligandPart>
</feature>
<feature type="binding site" description="proximal binding residue">
    <location>
        <position position="93"/>
    </location>
    <ligand>
        <name>heme b</name>
        <dbReference type="ChEBI" id="CHEBI:60344"/>
    </ligand>
    <ligandPart>
        <name>Fe</name>
        <dbReference type="ChEBI" id="CHEBI:18248"/>
    </ligandPart>
</feature>
<feature type="modified residue" description="N-acetylvaline" evidence="1">
    <location>
        <position position="2"/>
    </location>
</feature>
<feature type="modified residue" description="Phosphothreonine" evidence="2">
    <location>
        <position position="13"/>
    </location>
</feature>
<feature type="modified residue" description="Phosphoserine" evidence="2">
    <location>
        <position position="45"/>
    </location>
</feature>
<feature type="modified residue" description="N6-acetyllysine" evidence="2">
    <location>
        <position position="60"/>
    </location>
</feature>
<feature type="modified residue" description="N6-acetyllysine" evidence="2">
    <location>
        <position position="83"/>
    </location>
</feature>
<feature type="modified residue" description="S-nitrosocysteine" evidence="2">
    <location>
        <position position="94"/>
    </location>
</feature>
<feature type="modified residue" description="N6-acetyllysine" evidence="2">
    <location>
        <position position="145"/>
    </location>
</feature>
<feature type="helix" evidence="4">
    <location>
        <begin position="6"/>
        <end position="16"/>
    </location>
</feature>
<feature type="turn" evidence="4">
    <location>
        <begin position="21"/>
        <end position="23"/>
    </location>
</feature>
<feature type="helix" evidence="4">
    <location>
        <begin position="24"/>
        <end position="35"/>
    </location>
</feature>
<feature type="helix" evidence="4">
    <location>
        <begin position="37"/>
        <end position="46"/>
    </location>
</feature>
<feature type="helix" evidence="4">
    <location>
        <begin position="52"/>
        <end position="57"/>
    </location>
</feature>
<feature type="helix" evidence="4">
    <location>
        <begin position="59"/>
        <end position="77"/>
    </location>
</feature>
<feature type="helix" evidence="4">
    <location>
        <begin position="79"/>
        <end position="81"/>
    </location>
</feature>
<feature type="helix" evidence="4">
    <location>
        <begin position="82"/>
        <end position="95"/>
    </location>
</feature>
<feature type="helix" evidence="4">
    <location>
        <begin position="102"/>
        <end position="119"/>
    </location>
</feature>
<feature type="helix" evidence="4">
    <location>
        <begin position="120"/>
        <end position="122"/>
    </location>
</feature>
<feature type="helix" evidence="4">
    <location>
        <begin position="125"/>
        <end position="143"/>
    </location>
</feature>
<feature type="turn" evidence="4">
    <location>
        <begin position="144"/>
        <end position="146"/>
    </location>
</feature>
<name>HBB_LEPEU</name>
<gene>
    <name type="primary">HBB</name>
</gene>
<keyword id="KW-0002">3D-structure</keyword>
<keyword id="KW-0007">Acetylation</keyword>
<keyword id="KW-0349">Heme</keyword>
<keyword id="KW-0408">Iron</keyword>
<keyword id="KW-0479">Metal-binding</keyword>
<keyword id="KW-0561">Oxygen transport</keyword>
<keyword id="KW-0597">Phosphoprotein</keyword>
<keyword id="KW-0702">S-nitrosylation</keyword>
<keyword id="KW-0813">Transport</keyword>
<proteinExistence type="evidence at protein level"/>
<accession>P08535</accession>
<protein>
    <recommendedName>
        <fullName>Hemoglobin subunit beta</fullName>
    </recommendedName>
    <alternativeName>
        <fullName>Beta-globin</fullName>
    </alternativeName>
    <alternativeName>
        <fullName>Hemoglobin beta chain</fullName>
    </alternativeName>
</protein>
<evidence type="ECO:0000250" key="1">
    <source>
        <dbReference type="UniProtKB" id="P02086"/>
    </source>
</evidence>
<evidence type="ECO:0000250" key="2">
    <source>
        <dbReference type="UniProtKB" id="P68871"/>
    </source>
</evidence>
<evidence type="ECO:0000255" key="3">
    <source>
        <dbReference type="PROSITE-ProRule" id="PRU00238"/>
    </source>
</evidence>
<evidence type="ECO:0007829" key="4">
    <source>
        <dbReference type="PDB" id="3LQD"/>
    </source>
</evidence>
<organism>
    <name type="scientific">Lepus europaeus</name>
    <name type="common">European hare</name>
    <dbReference type="NCBI Taxonomy" id="9983"/>
    <lineage>
        <taxon>Eukaryota</taxon>
        <taxon>Metazoa</taxon>
        <taxon>Chordata</taxon>
        <taxon>Craniata</taxon>
        <taxon>Vertebrata</taxon>
        <taxon>Euteleostomi</taxon>
        <taxon>Mammalia</taxon>
        <taxon>Eutheria</taxon>
        <taxon>Euarchontoglires</taxon>
        <taxon>Glires</taxon>
        <taxon>Lagomorpha</taxon>
        <taxon>Leporidae</taxon>
        <taxon>Lepus</taxon>
    </lineage>
</organism>
<dbReference type="EMBL" id="Y00347">
    <property type="protein sequence ID" value="CAA68429.1"/>
    <property type="molecule type" value="Genomic_DNA"/>
</dbReference>
<dbReference type="PIR" id="A27101">
    <property type="entry name" value="A27101"/>
</dbReference>
<dbReference type="RefSeq" id="XP_062054168.1">
    <property type="nucleotide sequence ID" value="XM_062198184.1"/>
</dbReference>
<dbReference type="PDB" id="3LQD">
    <property type="method" value="X-ray"/>
    <property type="resolution" value="2.80 A"/>
    <property type="chains" value="B/D=2-147"/>
</dbReference>
<dbReference type="PDBsum" id="3LQD"/>
<dbReference type="SMR" id="P08535"/>
<dbReference type="GeneID" id="133764509"/>
<dbReference type="EvolutionaryTrace" id="P08535"/>
<dbReference type="GO" id="GO:0072562">
    <property type="term" value="C:blood microparticle"/>
    <property type="evidence" value="ECO:0007669"/>
    <property type="project" value="TreeGrafter"/>
</dbReference>
<dbReference type="GO" id="GO:0031838">
    <property type="term" value="C:haptoglobin-hemoglobin complex"/>
    <property type="evidence" value="ECO:0007669"/>
    <property type="project" value="TreeGrafter"/>
</dbReference>
<dbReference type="GO" id="GO:0005833">
    <property type="term" value="C:hemoglobin complex"/>
    <property type="evidence" value="ECO:0007669"/>
    <property type="project" value="InterPro"/>
</dbReference>
<dbReference type="GO" id="GO:0031720">
    <property type="term" value="F:haptoglobin binding"/>
    <property type="evidence" value="ECO:0007669"/>
    <property type="project" value="TreeGrafter"/>
</dbReference>
<dbReference type="GO" id="GO:0020037">
    <property type="term" value="F:heme binding"/>
    <property type="evidence" value="ECO:0007669"/>
    <property type="project" value="InterPro"/>
</dbReference>
<dbReference type="GO" id="GO:0031721">
    <property type="term" value="F:hemoglobin alpha binding"/>
    <property type="evidence" value="ECO:0007669"/>
    <property type="project" value="TreeGrafter"/>
</dbReference>
<dbReference type="GO" id="GO:0046872">
    <property type="term" value="F:metal ion binding"/>
    <property type="evidence" value="ECO:0007669"/>
    <property type="project" value="UniProtKB-KW"/>
</dbReference>
<dbReference type="GO" id="GO:0043177">
    <property type="term" value="F:organic acid binding"/>
    <property type="evidence" value="ECO:0007669"/>
    <property type="project" value="TreeGrafter"/>
</dbReference>
<dbReference type="GO" id="GO:0019825">
    <property type="term" value="F:oxygen binding"/>
    <property type="evidence" value="ECO:0007669"/>
    <property type="project" value="InterPro"/>
</dbReference>
<dbReference type="GO" id="GO:0005344">
    <property type="term" value="F:oxygen carrier activity"/>
    <property type="evidence" value="ECO:0007669"/>
    <property type="project" value="UniProtKB-KW"/>
</dbReference>
<dbReference type="GO" id="GO:0004601">
    <property type="term" value="F:peroxidase activity"/>
    <property type="evidence" value="ECO:0007669"/>
    <property type="project" value="TreeGrafter"/>
</dbReference>
<dbReference type="GO" id="GO:0042744">
    <property type="term" value="P:hydrogen peroxide catabolic process"/>
    <property type="evidence" value="ECO:0007669"/>
    <property type="project" value="TreeGrafter"/>
</dbReference>
<dbReference type="CDD" id="cd08925">
    <property type="entry name" value="Hb-beta-like"/>
    <property type="match status" value="1"/>
</dbReference>
<dbReference type="FunFam" id="1.10.490.10:FF:000001">
    <property type="entry name" value="Hemoglobin subunit beta"/>
    <property type="match status" value="1"/>
</dbReference>
<dbReference type="Gene3D" id="1.10.490.10">
    <property type="entry name" value="Globins"/>
    <property type="match status" value="1"/>
</dbReference>
<dbReference type="InterPro" id="IPR000971">
    <property type="entry name" value="Globin"/>
</dbReference>
<dbReference type="InterPro" id="IPR009050">
    <property type="entry name" value="Globin-like_sf"/>
</dbReference>
<dbReference type="InterPro" id="IPR012292">
    <property type="entry name" value="Globin/Proto"/>
</dbReference>
<dbReference type="InterPro" id="IPR002337">
    <property type="entry name" value="Hemoglobin_b"/>
</dbReference>
<dbReference type="InterPro" id="IPR050056">
    <property type="entry name" value="Hemoglobin_oxygen_transport"/>
</dbReference>
<dbReference type="PANTHER" id="PTHR11442">
    <property type="entry name" value="HEMOGLOBIN FAMILY MEMBER"/>
    <property type="match status" value="1"/>
</dbReference>
<dbReference type="PANTHER" id="PTHR11442:SF42">
    <property type="entry name" value="HEMOGLOBIN SUBUNIT BETA"/>
    <property type="match status" value="1"/>
</dbReference>
<dbReference type="Pfam" id="PF00042">
    <property type="entry name" value="Globin"/>
    <property type="match status" value="1"/>
</dbReference>
<dbReference type="PRINTS" id="PR00814">
    <property type="entry name" value="BETAHAEM"/>
</dbReference>
<dbReference type="SUPFAM" id="SSF46458">
    <property type="entry name" value="Globin-like"/>
    <property type="match status" value="1"/>
</dbReference>
<dbReference type="PROSITE" id="PS01033">
    <property type="entry name" value="GLOBIN"/>
    <property type="match status" value="1"/>
</dbReference>
<comment type="function">
    <text>Involved in oxygen transport from the lung to the various peripheral tissues.</text>
</comment>
<comment type="subunit">
    <text>Heterotetramer of two alpha chains and two beta chains.</text>
</comment>
<comment type="tissue specificity">
    <text>Red blood cells.</text>
</comment>
<comment type="similarity">
    <text evidence="3">Belongs to the globin family.</text>
</comment>
<reference key="1">
    <citation type="journal article" date="1987" name="Nucleic Acids Res.">
        <title>Nucleotide sequence of hare adult beta-globin gene with flanking regions.</title>
        <authorList>
            <person name="Pauplin Y."/>
            <person name="Rech J."/>
        </authorList>
    </citation>
    <scope>NUCLEOTIDE SEQUENCE [GENOMIC DNA]</scope>
</reference>